<name>ATP6_PENCH</name>
<comment type="function">
    <text>Mitochondrial membrane ATP synthase (F(1)F(0) ATP synthase or Complex V) produces ATP from ADP in the presence of a proton gradient across the membrane which is generated by electron transport complexes of the respiratory chain. F-type ATPases consist of two structural domains, F(1) - containing the extramembraneous catalytic core and F(0) - containing the membrane proton channel, linked together by a central stalk and a peripheral stalk. During catalysis, ATP synthesis in the catalytic domain of F(1) is coupled via a rotary mechanism of the central stalk subunits to proton translocation. Key component of the proton channel; it may play a direct role in the translocation of protons across the membrane.</text>
</comment>
<comment type="subunit">
    <text>F-type ATPases have 2 components, CF(1) - the catalytic core - and CF(0) - the membrane proton channel. CF(1) has five subunits: alpha(3), beta(3), gamma(1), delta(1), epsilon(1). CF(0) has three main subunits: a, b and c.</text>
</comment>
<comment type="subcellular location">
    <subcellularLocation>
        <location>Mitochondrion inner membrane</location>
        <topology>Multi-pass membrane protein</topology>
    </subcellularLocation>
</comment>
<comment type="similarity">
    <text evidence="3">Belongs to the ATPase A chain family.</text>
</comment>
<feature type="propeptide" id="PRO_0000002618" description="Removed in mature form" evidence="1">
    <location>
        <begin position="1"/>
        <end position="8"/>
    </location>
</feature>
<feature type="chain" id="PRO_0000002619" description="ATP synthase subunit a">
    <location>
        <begin position="9"/>
        <end position="257"/>
    </location>
</feature>
<feature type="transmembrane region" description="Helical" evidence="2">
    <location>
        <begin position="34"/>
        <end position="54"/>
    </location>
</feature>
<feature type="transmembrane region" description="Helical" evidence="2">
    <location>
        <begin position="93"/>
        <end position="113"/>
    </location>
</feature>
<feature type="transmembrane region" description="Helical" evidence="2">
    <location>
        <begin position="122"/>
        <end position="142"/>
    </location>
</feature>
<feature type="transmembrane region" description="Helical" evidence="2">
    <location>
        <begin position="149"/>
        <end position="169"/>
    </location>
</feature>
<feature type="transmembrane region" description="Helical" evidence="2">
    <location>
        <begin position="187"/>
        <end position="207"/>
    </location>
</feature>
<feature type="transmembrane region" description="Helical" evidence="2">
    <location>
        <begin position="210"/>
        <end position="230"/>
    </location>
</feature>
<feature type="transmembrane region" description="Helical" evidence="2">
    <location>
        <begin position="231"/>
        <end position="251"/>
    </location>
</feature>
<gene>
    <name type="primary">atp6</name>
</gene>
<proteinExistence type="inferred from homology"/>
<dbReference type="EMBL" id="Z23072">
    <property type="protein sequence ID" value="CAA80613.1"/>
    <property type="molecule type" value="Genomic_DNA"/>
</dbReference>
<dbReference type="EMBL" id="L19866">
    <property type="protein sequence ID" value="AAA58774.2"/>
    <property type="molecule type" value="Genomic_DNA"/>
</dbReference>
<dbReference type="PIR" id="S42271">
    <property type="entry name" value="S42271"/>
</dbReference>
<dbReference type="SMR" id="Q36918"/>
<dbReference type="GO" id="GO:0005743">
    <property type="term" value="C:mitochondrial inner membrane"/>
    <property type="evidence" value="ECO:0007669"/>
    <property type="project" value="UniProtKB-SubCell"/>
</dbReference>
<dbReference type="GO" id="GO:0045259">
    <property type="term" value="C:proton-transporting ATP synthase complex"/>
    <property type="evidence" value="ECO:0007669"/>
    <property type="project" value="UniProtKB-KW"/>
</dbReference>
<dbReference type="GO" id="GO:0046933">
    <property type="term" value="F:proton-transporting ATP synthase activity, rotational mechanism"/>
    <property type="evidence" value="ECO:0007669"/>
    <property type="project" value="TreeGrafter"/>
</dbReference>
<dbReference type="CDD" id="cd00310">
    <property type="entry name" value="ATP-synt_Fo_a_6"/>
    <property type="match status" value="1"/>
</dbReference>
<dbReference type="FunFam" id="1.20.120.220:FF:000003">
    <property type="entry name" value="ATP synthase subunit a"/>
    <property type="match status" value="1"/>
</dbReference>
<dbReference type="Gene3D" id="1.20.120.220">
    <property type="entry name" value="ATP synthase, F0 complex, subunit A"/>
    <property type="match status" value="1"/>
</dbReference>
<dbReference type="HAMAP" id="MF_01393">
    <property type="entry name" value="ATP_synth_a_bact"/>
    <property type="match status" value="1"/>
</dbReference>
<dbReference type="InterPro" id="IPR000568">
    <property type="entry name" value="ATP_synth_F0_asu"/>
</dbReference>
<dbReference type="InterPro" id="IPR023011">
    <property type="entry name" value="ATP_synth_F0_asu_AS"/>
</dbReference>
<dbReference type="InterPro" id="IPR045083">
    <property type="entry name" value="ATP_synth_F0_asu_bact/mt"/>
</dbReference>
<dbReference type="InterPro" id="IPR035908">
    <property type="entry name" value="F0_ATP_A_sf"/>
</dbReference>
<dbReference type="NCBIfam" id="TIGR01131">
    <property type="entry name" value="ATP_synt_6_or_A"/>
    <property type="match status" value="1"/>
</dbReference>
<dbReference type="NCBIfam" id="NF004482">
    <property type="entry name" value="PRK05815.2-4"/>
    <property type="match status" value="1"/>
</dbReference>
<dbReference type="PANTHER" id="PTHR11410">
    <property type="entry name" value="ATP SYNTHASE SUBUNIT A"/>
    <property type="match status" value="1"/>
</dbReference>
<dbReference type="PANTHER" id="PTHR11410:SF0">
    <property type="entry name" value="ATP SYNTHASE SUBUNIT A"/>
    <property type="match status" value="1"/>
</dbReference>
<dbReference type="Pfam" id="PF00119">
    <property type="entry name" value="ATP-synt_A"/>
    <property type="match status" value="1"/>
</dbReference>
<dbReference type="PRINTS" id="PR00123">
    <property type="entry name" value="ATPASEA"/>
</dbReference>
<dbReference type="SUPFAM" id="SSF81336">
    <property type="entry name" value="F1F0 ATP synthase subunit A"/>
    <property type="match status" value="1"/>
</dbReference>
<dbReference type="PROSITE" id="PS00449">
    <property type="entry name" value="ATPASE_A"/>
    <property type="match status" value="1"/>
</dbReference>
<reference key="1">
    <citation type="journal article" date="1993" name="Nucleic Acids Res.">
        <title>Genomic sequence of mitochondrial genes coding for ATPase subunit 6 and small subunit ribosomal RNA from Penicillium chrysogenum: a key for molecular systematics on fungi.</title>
        <authorList>
            <person name="Sheen J."/>
            <person name="Kho Y.H."/>
            <person name="Bae K.S."/>
        </authorList>
    </citation>
    <scope>NUCLEOTIDE SEQUENCE [GENOMIC DNA]</scope>
    <source>
        <strain>KCTC 1262</strain>
    </source>
</reference>
<protein>
    <recommendedName>
        <fullName>ATP synthase subunit a</fullName>
    </recommendedName>
    <alternativeName>
        <fullName>F-ATPase protein 6</fullName>
    </alternativeName>
</protein>
<geneLocation type="mitochondrion"/>
<keyword id="KW-0066">ATP synthesis</keyword>
<keyword id="KW-0138">CF(0)</keyword>
<keyword id="KW-0375">Hydrogen ion transport</keyword>
<keyword id="KW-0406">Ion transport</keyword>
<keyword id="KW-0472">Membrane</keyword>
<keyword id="KW-0496">Mitochondrion</keyword>
<keyword id="KW-0999">Mitochondrion inner membrane</keyword>
<keyword id="KW-0812">Transmembrane</keyword>
<keyword id="KW-1133">Transmembrane helix</keyword>
<keyword id="KW-0813">Transport</keyword>
<evidence type="ECO:0000250" key="1"/>
<evidence type="ECO:0000255" key="2"/>
<evidence type="ECO:0000305" key="3"/>
<accession>Q36918</accession>
<organism>
    <name type="scientific">Penicillium chrysogenum</name>
    <name type="common">Penicillium notatum</name>
    <dbReference type="NCBI Taxonomy" id="5076"/>
    <lineage>
        <taxon>Eukaryota</taxon>
        <taxon>Fungi</taxon>
        <taxon>Dikarya</taxon>
        <taxon>Ascomycota</taxon>
        <taxon>Pezizomycotina</taxon>
        <taxon>Eurotiomycetes</taxon>
        <taxon>Eurotiomycetidae</taxon>
        <taxon>Eurotiales</taxon>
        <taxon>Aspergillaceae</taxon>
        <taxon>Penicillium</taxon>
        <taxon>Penicillium chrysogenum species complex</taxon>
    </lineage>
</organism>
<sequence length="257" mass="28483">MRHLDFVLSPLDQFEVRDLFSLNANLLGNLHLSLTNIGLYLTISIFLILTYSLLATNNNKIIPNNWSISQESIYATVHGIVVNQINPNKGQMFFPLMYVLFIFILVNNLIGLVPYSFASTSHFILTFSISFTVVLGATILGFQRHGLKFFSLFVPSGCPLALLPLLVLIEFISYLSRNVSLGLRLAANILSGHMLLSILSGFTYNIMTSGIIFFILGLIPLAFIIAFSGLELAIAFIQAQVFVVLACSYIKDGLDLH</sequence>